<proteinExistence type="evidence at protein level"/>
<sequence>MEEDDEFGDLYSDVLQPFQPPVVLPPPPPLPHRSIDLNLRSQDQDVSEPNSAPISRVSDNDAVKLSTQDATRQAIVDGGGDDKDMSFDIEEPDADSTPTIPGLFVTGALPGLATDRGVSQVTTRIEQQVGGGGDGGYGGQGEGDDWDSDSEDDLQIVLNDSSRNVMIGGADRRSRMGDNEDDDDEDDEDPLVIVADTDPNQPMEEQMWGEDGLQGIEGDGKDGGEAGKGSGPGGATGPPKAGYSSHGYHPFHSQFKYVRPGAAPIPGGAASVGGPSSGQVRPPANLGPMAGRGRGDWRPLGMRNASAAQKGFHQPWGSNTAGRGLDFTLPSHKTIFEVDIDSFEEKPWRYPGVEMTDYFNFGLNEESWKDYCKQLDQHRIQTTMQSRIRVYESGRTDQGYDPDLPPELAAATGAQGVPVDSSNLVKPDSVQGDSAKVPANVRPTLPPGRPIPVETGSGERLPSIDTRAPRMRDLDAIIEIVCQDSHEDEPSGENGTDQADSSLPGENVPVETSYVNNKRPDTESAEHSPAQDEPHKNLLKKQDDEISRSTDSGQSFRSSSPVGDRGTRSSSVDREDVGGEAGKDAEMGEELKMSFTSPQSAVQEDDGGESKTERSSESSKARSGSHRDFQQEEDVIQDKHSSRPANNRKQYDNNAPHQSRKNQDRGKEMERTRAASKGGRENSNPHMELDSTYIYSIASREDFDKRKERDVDGAVWRRKEDDPYSRRGGDEGSRKRDREDDPGFRQRGKMRENEIRSKDDQVPSRKHMDDAGMRNIYEPDDHINKRRKDEEYLRRSRPEKNEISYGQRESMSRVKRERDDRLEHQKRDVQHKIRDDFDDHGSLRQRDDIYMQRDGNERLRERDVLDKLKLPHEDGISARGRERQVAVRGHRGSEDRSSRMKDEYKASDKEHVTKDTLRHAKQTKRRDYPGEESSSHHRGHEDFSARTDNIVNNEKKPRQERTGAKIDKFIDTLDGQRLQDRKHKDSRRKIKEQREGTESLSKQGEQNGSSVVTGSKGTNDARNCRSEIPHQPNTAKRHKENASSGDEIHDSKRGRTKLERWASHKEREDAVSAKSSSISSKLEEKENNTNGRLSEPVHGSIGKSRDVTEEKIGHDLADTKDGSEKGPGDRHLDTVEKLKKRSERFKLPMPTEKDTTGVKKMESETLPSAKIEGPVDSEGEYVWDERSCVRIGREYA</sequence>
<evidence type="ECO:0000250" key="1">
    <source>
        <dbReference type="UniProtKB" id="Q6UN15"/>
    </source>
</evidence>
<evidence type="ECO:0000255" key="2">
    <source>
        <dbReference type="PROSITE-ProRule" id="PRU00768"/>
    </source>
</evidence>
<evidence type="ECO:0000256" key="3">
    <source>
        <dbReference type="SAM" id="MobiDB-lite"/>
    </source>
</evidence>
<evidence type="ECO:0000269" key="4">
    <source>
    </source>
</evidence>
<evidence type="ECO:0000269" key="5">
    <source>
    </source>
</evidence>
<evidence type="ECO:0000269" key="6">
    <source>
    </source>
</evidence>
<evidence type="ECO:0000269" key="7">
    <source>
    </source>
</evidence>
<evidence type="ECO:0000303" key="8">
    <source>
    </source>
</evidence>
<evidence type="ECO:0000305" key="9"/>
<evidence type="ECO:0000312" key="10">
    <source>
        <dbReference type="Araport" id="AT5G58040"/>
    </source>
</evidence>
<evidence type="ECO:0000312" key="11">
    <source>
        <dbReference type="Proteomes" id="UP000006548"/>
    </source>
</evidence>
<protein>
    <recommendedName>
        <fullName evidence="8">FIP1[V]-like protein</fullName>
        <shortName evidence="8">AtFIP1(V)</shortName>
    </recommendedName>
    <alternativeName>
        <fullName evidence="9">Factor interacting with poly(A) polymerase 1-like 5</fullName>
        <shortName evidence="8">AtFIPS5</shortName>
    </alternativeName>
    <alternativeName>
        <fullName evidence="9">Protein HOMOLOG OF YEAST FIP1 [V]</fullName>
    </alternativeName>
</protein>
<organism evidence="11">
    <name type="scientific">Arabidopsis thaliana</name>
    <name type="common">Mouse-ear cress</name>
    <dbReference type="NCBI Taxonomy" id="3702"/>
    <lineage>
        <taxon>Eukaryota</taxon>
        <taxon>Viridiplantae</taxon>
        <taxon>Streptophyta</taxon>
        <taxon>Embryophyta</taxon>
        <taxon>Tracheophyta</taxon>
        <taxon>Spermatophyta</taxon>
        <taxon>Magnoliopsida</taxon>
        <taxon>eudicotyledons</taxon>
        <taxon>Gunneridae</taxon>
        <taxon>Pentapetalae</taxon>
        <taxon>rosids</taxon>
        <taxon>malvids</taxon>
        <taxon>Brassicales</taxon>
        <taxon>Brassicaceae</taxon>
        <taxon>Camelineae</taxon>
        <taxon>Arabidopsis</taxon>
    </lineage>
</organism>
<comment type="function">
    <text evidence="1 4">Essential gene (PubMed:16282318). Component of the cleavage and polyadenylation specificity factor (CPSF) complex that plays a key role in pre-mRNA 3'-end formation, recognizing the AAUAAA signal sequence and interacting with poly(A) polymerase and other factors to bring about cleavage and poly(A) addition. FIP1L1 contributes to poly(A) site recognition and stimulates poly(A) addition. Binds to U-rich RNA sequence elements surrounding the poly(A) site. May act to tether poly(A) polymerase to the CPSF complex (By similarity).</text>
</comment>
<comment type="subunit">
    <text evidence="1 4 5 6 7">Component of the cleavage and polyadenylation specificity factor (CPSF) complex (By similarity). Forms a complex with cleavage and polyadenylation specificity factor (CPSF) subunits CFIS1, CFIS2, CPSF30, CSTF50, CSTF64, CSTF77, FIPS3, PABN1, PABN2, PABN3, PAPS4, CFIM25 and PABN1. Binds RNA (PubMed:16282318, PubMed:17576667, PubMed:18221017, PubMed:18479511).</text>
</comment>
<comment type="interaction">
    <interactant intactId="EBI-962489">
        <id>F4KDH9</id>
    </interactant>
    <interactant intactId="EBI-962531">
        <id>Q94AF0</id>
        <label>CFIS1</label>
    </interactant>
    <organismsDiffer>false</organismsDiffer>
    <experiments>3</experiments>
</comment>
<comment type="interaction">
    <interactant intactId="EBI-962489">
        <id>F4KDH9</id>
    </interactant>
    <interactant intactId="EBI-962511">
        <id>A9LNK9</id>
        <label>CPSF30</label>
    </interactant>
    <organismsDiffer>false</organismsDiffer>
    <experiments>3</experiments>
</comment>
<comment type="interaction">
    <interactant intactId="EBI-962489">
        <id>F4KDH9</id>
    </interactant>
    <interactant intactId="EBI-962489">
        <id>F4KDH9</id>
        <label>FIPS5</label>
    </interactant>
    <organismsDiffer>false</organismsDiffer>
    <experiments>2</experiments>
</comment>
<comment type="interaction">
    <interactant intactId="EBI-962489">
        <id>F4KDH9</id>
    </interactant>
    <interactant intactId="EBI-962543">
        <id>Q93VI4</id>
        <label>PABN1</label>
    </interactant>
    <organismsDiffer>false</organismsDiffer>
    <experiments>3</experiments>
</comment>
<comment type="interaction">
    <interactant intactId="EBI-962489">
        <id>F4KDH9</id>
    </interactant>
    <interactant intactId="EBI-962558">
        <id>Q8VYW1</id>
        <label>PAPS4</label>
    </interactant>
    <organismsDiffer>false</organismsDiffer>
    <experiments>3</experiments>
</comment>
<comment type="subcellular location">
    <subcellularLocation>
        <location evidence="1 2">Nucleus</location>
    </subcellularLocation>
</comment>
<comment type="tissue specificity">
    <text evidence="4">Expressed in leaves, stems, flower tissues and roots.</text>
</comment>
<comment type="disruption phenotype">
    <text evidence="4">Lethal.</text>
</comment>
<comment type="similarity">
    <text evidence="9">Belongs to the FIP1 family.</text>
</comment>
<comment type="sequence caution" evidence="9">
    <conflict type="erroneous gene model prediction">
        <sequence resource="EMBL-CDS" id="BAB10995"/>
    </conflict>
</comment>
<feature type="chain" id="PRO_0000431327" description="FIP1[V]-like protein">
    <location>
        <begin position="1"/>
        <end position="1196"/>
    </location>
</feature>
<feature type="region of interest" description="Disordered" evidence="3">
    <location>
        <begin position="1"/>
        <end position="102"/>
    </location>
</feature>
<feature type="region of interest" description="Disordered" evidence="3">
    <location>
        <begin position="117"/>
        <end position="248"/>
    </location>
</feature>
<feature type="region of interest" description="Disordered" evidence="3">
    <location>
        <begin position="268"/>
        <end position="300"/>
    </location>
</feature>
<feature type="region of interest" description="Disordered" evidence="3">
    <location>
        <begin position="413"/>
        <end position="472"/>
    </location>
</feature>
<feature type="region of interest" description="Disordered" evidence="3">
    <location>
        <begin position="485"/>
        <end position="1174"/>
    </location>
</feature>
<feature type="short sequence motif" description="Nuclear localization signal 1" evidence="2">
    <location>
        <begin position="704"/>
        <end position="711"/>
    </location>
</feature>
<feature type="short sequence motif" description="Nuclear localization signal 2" evidence="2">
    <location>
        <begin position="734"/>
        <end position="741"/>
    </location>
</feature>
<feature type="compositionally biased region" description="Pro residues" evidence="3">
    <location>
        <begin position="18"/>
        <end position="31"/>
    </location>
</feature>
<feature type="compositionally biased region" description="Polar residues" evidence="3">
    <location>
        <begin position="117"/>
        <end position="126"/>
    </location>
</feature>
<feature type="compositionally biased region" description="Gly residues" evidence="3">
    <location>
        <begin position="129"/>
        <end position="141"/>
    </location>
</feature>
<feature type="compositionally biased region" description="Acidic residues" evidence="3">
    <location>
        <begin position="142"/>
        <end position="154"/>
    </location>
</feature>
<feature type="compositionally biased region" description="Acidic residues" evidence="3">
    <location>
        <begin position="179"/>
        <end position="190"/>
    </location>
</feature>
<feature type="compositionally biased region" description="Gly residues" evidence="3">
    <location>
        <begin position="226"/>
        <end position="236"/>
    </location>
</feature>
<feature type="compositionally biased region" description="Low complexity" evidence="3">
    <location>
        <begin position="268"/>
        <end position="278"/>
    </location>
</feature>
<feature type="compositionally biased region" description="Basic and acidic residues" evidence="3">
    <location>
        <begin position="518"/>
        <end position="548"/>
    </location>
</feature>
<feature type="compositionally biased region" description="Polar residues" evidence="3">
    <location>
        <begin position="549"/>
        <end position="561"/>
    </location>
</feature>
<feature type="compositionally biased region" description="Basic and acidic residues" evidence="3">
    <location>
        <begin position="565"/>
        <end position="592"/>
    </location>
</feature>
<feature type="compositionally biased region" description="Basic and acidic residues" evidence="3">
    <location>
        <begin position="608"/>
        <end position="641"/>
    </location>
</feature>
<feature type="compositionally biased region" description="Polar residues" evidence="3">
    <location>
        <begin position="643"/>
        <end position="657"/>
    </location>
</feature>
<feature type="compositionally biased region" description="Basic and acidic residues" evidence="3">
    <location>
        <begin position="661"/>
        <end position="673"/>
    </location>
</feature>
<feature type="compositionally biased region" description="Basic and acidic residues" evidence="3">
    <location>
        <begin position="699"/>
        <end position="802"/>
    </location>
</feature>
<feature type="compositionally biased region" description="Basic and acidic residues" evidence="3">
    <location>
        <begin position="810"/>
        <end position="918"/>
    </location>
</feature>
<feature type="compositionally biased region" description="Basic and acidic residues" evidence="3">
    <location>
        <begin position="925"/>
        <end position="945"/>
    </location>
</feature>
<feature type="compositionally biased region" description="Basic and acidic residues" evidence="3">
    <location>
        <begin position="953"/>
        <end position="971"/>
    </location>
</feature>
<feature type="compositionally biased region" description="Polar residues" evidence="3">
    <location>
        <begin position="998"/>
        <end position="1021"/>
    </location>
</feature>
<feature type="compositionally biased region" description="Basic and acidic residues" evidence="3">
    <location>
        <begin position="1046"/>
        <end position="1071"/>
    </location>
</feature>
<feature type="compositionally biased region" description="Basic and acidic residues" evidence="3">
    <location>
        <begin position="1103"/>
        <end position="1137"/>
    </location>
</feature>
<feature type="compositionally biased region" description="Basic and acidic residues" evidence="3">
    <location>
        <begin position="1151"/>
        <end position="1163"/>
    </location>
</feature>
<accession>F4KDH9</accession>
<accession>Q9FGU0</accession>
<reference key="1">
    <citation type="journal article" date="2000" name="DNA Res.">
        <title>Structural analysis of Arabidopsis thaliana chromosome 5. X. Sequence features of the regions of 3,076,755 bp covered by sixty P1 and TAC clones.</title>
        <authorList>
            <person name="Sato S."/>
            <person name="Nakamura Y."/>
            <person name="Kaneko T."/>
            <person name="Katoh T."/>
            <person name="Asamizu E."/>
            <person name="Kotani H."/>
            <person name="Tabata S."/>
        </authorList>
    </citation>
    <scope>NUCLEOTIDE SEQUENCE [LARGE SCALE GENOMIC DNA]</scope>
    <source>
        <strain>cv. Columbia</strain>
    </source>
</reference>
<reference key="2">
    <citation type="journal article" date="2017" name="Plant J.">
        <title>Araport11: a complete reannotation of the Arabidopsis thaliana reference genome.</title>
        <authorList>
            <person name="Cheng C.Y."/>
            <person name="Krishnakumar V."/>
            <person name="Chan A.P."/>
            <person name="Thibaud-Nissen F."/>
            <person name="Schobel S."/>
            <person name="Town C.D."/>
        </authorList>
    </citation>
    <scope>GENOME REANNOTATION</scope>
    <source>
        <strain>cv. Columbia</strain>
    </source>
</reference>
<reference key="3">
    <citation type="journal article" date="2006" name="J. Biol. Chem.">
        <title>An Arabidopsis Fip1 homolog interacts with RNA and provides conceptual links with a number of other polyadenylation factor subunits.</title>
        <authorList>
            <person name="Forbes K.P."/>
            <person name="Addepalli B."/>
            <person name="Hunt A.G."/>
        </authorList>
    </citation>
    <scope>FUNCTION</scope>
    <scope>DISRUPTION PHENOTYPE</scope>
    <scope>INTERACTION WITH CSTF77; CPSF30; PAPS4; CFIM25 AND PABN1</scope>
    <scope>TISSUE SPECIFICITY</scope>
    <scope>RNA-BINDING</scope>
    <scope>GENE FAMILY</scope>
</reference>
<reference key="4">
    <citation type="journal article" date="2007" name="Nucleic Acids Res.">
        <title>A novel endonuclease activity associated with the Arabidopsis ortholog of the 30-kDa subunit of cleavage and polyadenylation specificity factor.</title>
        <authorList>
            <person name="Addepalli B."/>
            <person name="Hunt A.G."/>
        </authorList>
    </citation>
    <scope>INTERACTION WITH CPSF30</scope>
</reference>
<reference key="5">
    <citation type="journal article" date="2008" name="BMC Genomics">
        <title>Arabidopsis mRNA polyadenylation machinery: comprehensive analysis of protein-protein interactions and gene expression profiling.</title>
        <authorList>
            <person name="Hunt A.G."/>
            <person name="Xu R."/>
            <person name="Addepalli B."/>
            <person name="Rao S."/>
            <person name="Forbes K.P."/>
            <person name="Meeks L.R."/>
            <person name="Xing D."/>
            <person name="Mo M."/>
            <person name="Zhao H."/>
            <person name="Bandyopadhyay A."/>
            <person name="Dampanaboina L."/>
            <person name="Marion A."/>
            <person name="Von Lanken C."/>
            <person name="Li Q.Q."/>
        </authorList>
    </citation>
    <scope>INTERACTION WITH CFIS1; CFIS2; CSTF64; CSTF77; CPSF30; CSTF50; PABN1; PABN2; PABN3; PAPS2; PAPS3; PAPS4 AND FIPS3</scope>
    <scope>GENE FAMILY</scope>
    <scope>NOMENCLATURE</scope>
</reference>
<reference key="6">
    <citation type="journal article" date="2008" name="Protein Pept. Lett.">
        <title>The interaction between two Arabidopsis polyadenylation factor subunits involves an evolutionarily-conserved motif and has implications for the assembly and function of the polyadenylation complex.</title>
        <authorList>
            <person name="Addepalli B."/>
            <person name="Hunt A.G."/>
        </authorList>
    </citation>
    <scope>INTERACTION WITH CSTF77</scope>
</reference>
<keyword id="KW-0507">mRNA processing</keyword>
<keyword id="KW-0539">Nucleus</keyword>
<keyword id="KW-1185">Reference proteome</keyword>
<keyword id="KW-0677">Repeat</keyword>
<keyword id="KW-0694">RNA-binding</keyword>
<dbReference type="EMBL" id="AB024029">
    <property type="protein sequence ID" value="BAB10995.1"/>
    <property type="status" value="ALT_SEQ"/>
    <property type="molecule type" value="Genomic_DNA"/>
</dbReference>
<dbReference type="EMBL" id="CP002688">
    <property type="protein sequence ID" value="AED96990.1"/>
    <property type="molecule type" value="Genomic_DNA"/>
</dbReference>
<dbReference type="RefSeq" id="NP_200612.2">
    <property type="nucleotide sequence ID" value="NM_125189.3"/>
</dbReference>
<dbReference type="SMR" id="F4KDH9"/>
<dbReference type="BioGRID" id="21160">
    <property type="interactions" value="13"/>
</dbReference>
<dbReference type="FunCoup" id="F4KDH9">
    <property type="interactions" value="1062"/>
</dbReference>
<dbReference type="IntAct" id="F4KDH9">
    <property type="interactions" value="12"/>
</dbReference>
<dbReference type="STRING" id="3702.F4KDH9"/>
<dbReference type="iPTMnet" id="F4KDH9"/>
<dbReference type="PaxDb" id="3702-AT5G58040.1"/>
<dbReference type="ProteomicsDB" id="230595"/>
<dbReference type="EnsemblPlants" id="AT5G58040.1">
    <property type="protein sequence ID" value="AT5G58040.1"/>
    <property type="gene ID" value="AT5G58040"/>
</dbReference>
<dbReference type="GeneID" id="835916"/>
<dbReference type="Gramene" id="AT5G58040.1">
    <property type="protein sequence ID" value="AT5G58040.1"/>
    <property type="gene ID" value="AT5G58040"/>
</dbReference>
<dbReference type="KEGG" id="ath:AT5G58040"/>
<dbReference type="Araport" id="AT5G58040"/>
<dbReference type="TAIR" id="AT5G58040">
    <property type="gene designation" value="FIP1[V]"/>
</dbReference>
<dbReference type="eggNOG" id="KOG1049">
    <property type="taxonomic scope" value="Eukaryota"/>
</dbReference>
<dbReference type="HOGENOM" id="CLU_006491_1_0_1"/>
<dbReference type="InParanoid" id="F4KDH9"/>
<dbReference type="PRO" id="PR:F4KDH9"/>
<dbReference type="Proteomes" id="UP000006548">
    <property type="component" value="Chromosome 5"/>
</dbReference>
<dbReference type="ExpressionAtlas" id="F4KDH9">
    <property type="expression patterns" value="baseline and differential"/>
</dbReference>
<dbReference type="GO" id="GO:0005634">
    <property type="term" value="C:nucleus"/>
    <property type="evidence" value="ECO:0007669"/>
    <property type="project" value="UniProtKB-SubCell"/>
</dbReference>
<dbReference type="GO" id="GO:0042802">
    <property type="term" value="F:identical protein binding"/>
    <property type="evidence" value="ECO:0000353"/>
    <property type="project" value="IntAct"/>
</dbReference>
<dbReference type="GO" id="GO:0003723">
    <property type="term" value="F:RNA binding"/>
    <property type="evidence" value="ECO:0000314"/>
    <property type="project" value="TAIR"/>
</dbReference>
<dbReference type="GO" id="GO:0006397">
    <property type="term" value="P:mRNA processing"/>
    <property type="evidence" value="ECO:0007669"/>
    <property type="project" value="UniProtKB-KW"/>
</dbReference>
<dbReference type="InterPro" id="IPR007854">
    <property type="entry name" value="Fip1_dom"/>
</dbReference>
<dbReference type="InterPro" id="IPR044976">
    <property type="entry name" value="FIPS5/FIPS3-like"/>
</dbReference>
<dbReference type="PANTHER" id="PTHR36884">
    <property type="entry name" value="FIP1[III]-LIKE PROTEIN"/>
    <property type="match status" value="1"/>
</dbReference>
<dbReference type="PANTHER" id="PTHR36884:SF1">
    <property type="entry name" value="FIP1[V]-LIKE PROTEIN"/>
    <property type="match status" value="1"/>
</dbReference>
<dbReference type="Pfam" id="PF05182">
    <property type="entry name" value="Fip1"/>
    <property type="match status" value="1"/>
</dbReference>
<gene>
    <name evidence="8" type="primary">FIPS5</name>
    <name evidence="8" type="synonym">FIP1[V]</name>
    <name evidence="10" type="ordered locus">At5g58040</name>
</gene>
<name>FIPS5_ARATH</name>